<gene>
    <name evidence="1" type="primary">gcvPA</name>
    <name type="ordered locus">lwe1364</name>
</gene>
<keyword id="KW-0560">Oxidoreductase</keyword>
<organism>
    <name type="scientific">Listeria welshimeri serovar 6b (strain ATCC 35897 / DSM 20650 / CCUG 15529 / CIP 8149 / NCTC 11857 / SLCC 5334 / V8)</name>
    <dbReference type="NCBI Taxonomy" id="386043"/>
    <lineage>
        <taxon>Bacteria</taxon>
        <taxon>Bacillati</taxon>
        <taxon>Bacillota</taxon>
        <taxon>Bacilli</taxon>
        <taxon>Bacillales</taxon>
        <taxon>Listeriaceae</taxon>
        <taxon>Listeria</taxon>
    </lineage>
</organism>
<reference key="1">
    <citation type="journal article" date="2006" name="J. Bacteriol.">
        <title>Whole-genome sequence of Listeria welshimeri reveals common steps in genome reduction with Listeria innocua as compared to Listeria monocytogenes.</title>
        <authorList>
            <person name="Hain T."/>
            <person name="Steinweg C."/>
            <person name="Kuenne C.T."/>
            <person name="Billion A."/>
            <person name="Ghai R."/>
            <person name="Chatterjee S.S."/>
            <person name="Domann E."/>
            <person name="Kaerst U."/>
            <person name="Goesmann A."/>
            <person name="Bekel T."/>
            <person name="Bartels D."/>
            <person name="Kaiser O."/>
            <person name="Meyer F."/>
            <person name="Puehler A."/>
            <person name="Weisshaar B."/>
            <person name="Wehland J."/>
            <person name="Liang C."/>
            <person name="Dandekar T."/>
            <person name="Lampidis R."/>
            <person name="Kreft J."/>
            <person name="Goebel W."/>
            <person name="Chakraborty T."/>
        </authorList>
    </citation>
    <scope>NUCLEOTIDE SEQUENCE [LARGE SCALE GENOMIC DNA]</scope>
    <source>
        <strain>ATCC 35897 / DSM 20650 / CCUG 15529 / CIP 8149 / NCTC 11857 / SLCC 5334 / V8</strain>
    </source>
</reference>
<comment type="function">
    <text evidence="1">The glycine cleavage system catalyzes the degradation of glycine. The P protein binds the alpha-amino group of glycine through its pyridoxal phosphate cofactor; CO(2) is released and the remaining methylamine moiety is then transferred to the lipoamide cofactor of the H protein.</text>
</comment>
<comment type="catalytic activity">
    <reaction evidence="1">
        <text>N(6)-[(R)-lipoyl]-L-lysyl-[glycine-cleavage complex H protein] + glycine + H(+) = N(6)-[(R)-S(8)-aminomethyldihydrolipoyl]-L-lysyl-[glycine-cleavage complex H protein] + CO2</text>
        <dbReference type="Rhea" id="RHEA:24304"/>
        <dbReference type="Rhea" id="RHEA-COMP:10494"/>
        <dbReference type="Rhea" id="RHEA-COMP:10495"/>
        <dbReference type="ChEBI" id="CHEBI:15378"/>
        <dbReference type="ChEBI" id="CHEBI:16526"/>
        <dbReference type="ChEBI" id="CHEBI:57305"/>
        <dbReference type="ChEBI" id="CHEBI:83099"/>
        <dbReference type="ChEBI" id="CHEBI:83143"/>
        <dbReference type="EC" id="1.4.4.2"/>
    </reaction>
</comment>
<comment type="subunit">
    <text evidence="1">The glycine cleavage system is composed of four proteins: P, T, L and H. In this organism, the P 'protein' is a heterodimer of two subunits.</text>
</comment>
<comment type="similarity">
    <text evidence="1">Belongs to the GcvP family. N-terminal subunit subfamily.</text>
</comment>
<evidence type="ECO:0000255" key="1">
    <source>
        <dbReference type="HAMAP-Rule" id="MF_00712"/>
    </source>
</evidence>
<name>GCSPA_LISW6</name>
<accession>A0AIF0</accession>
<feature type="chain" id="PRO_1000045664" description="Probable glycine dehydrogenase (decarboxylating) subunit 1">
    <location>
        <begin position="1"/>
        <end position="448"/>
    </location>
</feature>
<protein>
    <recommendedName>
        <fullName evidence="1">Probable glycine dehydrogenase (decarboxylating) subunit 1</fullName>
        <ecNumber evidence="1">1.4.4.2</ecNumber>
    </recommendedName>
    <alternativeName>
        <fullName evidence="1">Glycine cleavage system P-protein subunit 1</fullName>
    </alternativeName>
    <alternativeName>
        <fullName evidence="1">Glycine decarboxylase subunit 1</fullName>
    </alternativeName>
    <alternativeName>
        <fullName evidence="1">Glycine dehydrogenase (aminomethyl-transferring) subunit 1</fullName>
    </alternativeName>
</protein>
<sequence>MAKHRYLPMTEQDEKEMLDVIGVKSIDDLFQDIPEKIRFKRDYDLKPAKSEPALLRELSKLASKNANTAEYASFLGAGVYSHYIPTVVDHVISRSEFYTAYTPYQPEISQGELQAIFEFQTMIAELTGMDLANSSMYDGGTALAEAAMLASGHTKRKKILISGAVHPESSNVLKTYATGQHIEVEVIPEIDGKTDMDALKKALSEDIAGFVVQYPNFYGQVEPLAELEKLIHENNSLLLVSSNPLSLGLLTPPGEFGADIVVGDSQVFGIPESFGGPHCGFFAVTNKLMRKVPGRLVGETVDENGKRGYVLTLQAREQHIRRDKATSNICSNQALNALASSVAMATLGKTGLIEMAKQNLDKSHYAKQKFRENGFEVLFSDGFFNEFVVKLSKPIKEVNESLLDEGIIGGYDLGFYDTKYEKHMLVAVTEMRTKEEIDAFVASLEGVK</sequence>
<proteinExistence type="inferred from homology"/>
<dbReference type="EC" id="1.4.4.2" evidence="1"/>
<dbReference type="EMBL" id="AM263198">
    <property type="protein sequence ID" value="CAK20782.1"/>
    <property type="molecule type" value="Genomic_DNA"/>
</dbReference>
<dbReference type="RefSeq" id="WP_011702164.1">
    <property type="nucleotide sequence ID" value="NC_008555.1"/>
</dbReference>
<dbReference type="SMR" id="A0AIF0"/>
<dbReference type="STRING" id="386043.lwe1364"/>
<dbReference type="GeneID" id="61189240"/>
<dbReference type="KEGG" id="lwe:lwe1364"/>
<dbReference type="eggNOG" id="COG0403">
    <property type="taxonomic scope" value="Bacteria"/>
</dbReference>
<dbReference type="HOGENOM" id="CLU_004620_0_2_9"/>
<dbReference type="OrthoDB" id="9771867at2"/>
<dbReference type="Proteomes" id="UP000000779">
    <property type="component" value="Chromosome"/>
</dbReference>
<dbReference type="GO" id="GO:0004375">
    <property type="term" value="F:glycine dehydrogenase (decarboxylating) activity"/>
    <property type="evidence" value="ECO:0007669"/>
    <property type="project" value="UniProtKB-EC"/>
</dbReference>
<dbReference type="GO" id="GO:0019464">
    <property type="term" value="P:glycine decarboxylation via glycine cleavage system"/>
    <property type="evidence" value="ECO:0007669"/>
    <property type="project" value="UniProtKB-UniRule"/>
</dbReference>
<dbReference type="GO" id="GO:0009116">
    <property type="term" value="P:nucleoside metabolic process"/>
    <property type="evidence" value="ECO:0007669"/>
    <property type="project" value="InterPro"/>
</dbReference>
<dbReference type="CDD" id="cd00613">
    <property type="entry name" value="GDC-P"/>
    <property type="match status" value="1"/>
</dbReference>
<dbReference type="FunFam" id="3.40.640.10:FF:000113">
    <property type="entry name" value="Probable glycine dehydrogenase (decarboxylating) subunit 1"/>
    <property type="match status" value="1"/>
</dbReference>
<dbReference type="FunFam" id="3.90.1150.10:FF:000116">
    <property type="entry name" value="Probable glycine dehydrogenase (decarboxylating) subunit 1"/>
    <property type="match status" value="1"/>
</dbReference>
<dbReference type="Gene3D" id="3.90.1150.10">
    <property type="entry name" value="Aspartate Aminotransferase, domain 1"/>
    <property type="match status" value="1"/>
</dbReference>
<dbReference type="Gene3D" id="3.40.640.10">
    <property type="entry name" value="Type I PLP-dependent aspartate aminotransferase-like (Major domain)"/>
    <property type="match status" value="1"/>
</dbReference>
<dbReference type="HAMAP" id="MF_00712">
    <property type="entry name" value="GcvPA"/>
    <property type="match status" value="1"/>
</dbReference>
<dbReference type="InterPro" id="IPR023010">
    <property type="entry name" value="GcvPA"/>
</dbReference>
<dbReference type="InterPro" id="IPR049315">
    <property type="entry name" value="GDC-P_N"/>
</dbReference>
<dbReference type="InterPro" id="IPR020581">
    <property type="entry name" value="GDC_P"/>
</dbReference>
<dbReference type="InterPro" id="IPR015424">
    <property type="entry name" value="PyrdxlP-dep_Trfase"/>
</dbReference>
<dbReference type="InterPro" id="IPR015421">
    <property type="entry name" value="PyrdxlP-dep_Trfase_major"/>
</dbReference>
<dbReference type="InterPro" id="IPR015422">
    <property type="entry name" value="PyrdxlP-dep_Trfase_small"/>
</dbReference>
<dbReference type="NCBIfam" id="NF001696">
    <property type="entry name" value="PRK00451.1"/>
    <property type="match status" value="1"/>
</dbReference>
<dbReference type="PANTHER" id="PTHR42806">
    <property type="entry name" value="GLYCINE CLEAVAGE SYSTEM P-PROTEIN"/>
    <property type="match status" value="1"/>
</dbReference>
<dbReference type="PANTHER" id="PTHR42806:SF1">
    <property type="entry name" value="GLYCINE DEHYDROGENASE (DECARBOXYLATING)"/>
    <property type="match status" value="1"/>
</dbReference>
<dbReference type="Pfam" id="PF02347">
    <property type="entry name" value="GDC-P"/>
    <property type="match status" value="1"/>
</dbReference>
<dbReference type="PIRSF" id="PIRSF006815">
    <property type="entry name" value="GcvPA"/>
    <property type="match status" value="1"/>
</dbReference>
<dbReference type="SUPFAM" id="SSF53383">
    <property type="entry name" value="PLP-dependent transferases"/>
    <property type="match status" value="1"/>
</dbReference>